<evidence type="ECO:0000255" key="1">
    <source>
        <dbReference type="HAMAP-Rule" id="MF_01006"/>
    </source>
</evidence>
<proteinExistence type="inferred from homology"/>
<name>UPPP_LAWIP</name>
<dbReference type="EC" id="3.6.1.27" evidence="1"/>
<dbReference type="EMBL" id="AM180252">
    <property type="protein sequence ID" value="CAJ54611.1"/>
    <property type="molecule type" value="Genomic_DNA"/>
</dbReference>
<dbReference type="SMR" id="Q1MQW6"/>
<dbReference type="STRING" id="363253.LI0557"/>
<dbReference type="KEGG" id="lip:LI0557"/>
<dbReference type="eggNOG" id="COG1968">
    <property type="taxonomic scope" value="Bacteria"/>
</dbReference>
<dbReference type="HOGENOM" id="CLU_060296_2_0_7"/>
<dbReference type="OrthoDB" id="9808289at2"/>
<dbReference type="Proteomes" id="UP000002430">
    <property type="component" value="Chromosome"/>
</dbReference>
<dbReference type="GO" id="GO:0005886">
    <property type="term" value="C:plasma membrane"/>
    <property type="evidence" value="ECO:0007669"/>
    <property type="project" value="UniProtKB-SubCell"/>
</dbReference>
<dbReference type="GO" id="GO:0050380">
    <property type="term" value="F:undecaprenyl-diphosphatase activity"/>
    <property type="evidence" value="ECO:0007669"/>
    <property type="project" value="UniProtKB-UniRule"/>
</dbReference>
<dbReference type="GO" id="GO:0071555">
    <property type="term" value="P:cell wall organization"/>
    <property type="evidence" value="ECO:0007669"/>
    <property type="project" value="UniProtKB-KW"/>
</dbReference>
<dbReference type="GO" id="GO:0009252">
    <property type="term" value="P:peptidoglycan biosynthetic process"/>
    <property type="evidence" value="ECO:0007669"/>
    <property type="project" value="UniProtKB-KW"/>
</dbReference>
<dbReference type="GO" id="GO:0008360">
    <property type="term" value="P:regulation of cell shape"/>
    <property type="evidence" value="ECO:0007669"/>
    <property type="project" value="UniProtKB-KW"/>
</dbReference>
<dbReference type="GO" id="GO:0046677">
    <property type="term" value="P:response to antibiotic"/>
    <property type="evidence" value="ECO:0007669"/>
    <property type="project" value="UniProtKB-UniRule"/>
</dbReference>
<dbReference type="HAMAP" id="MF_01006">
    <property type="entry name" value="Undec_diphosphatase"/>
    <property type="match status" value="1"/>
</dbReference>
<dbReference type="InterPro" id="IPR003824">
    <property type="entry name" value="UppP"/>
</dbReference>
<dbReference type="NCBIfam" id="NF001390">
    <property type="entry name" value="PRK00281.1-4"/>
    <property type="match status" value="1"/>
</dbReference>
<dbReference type="NCBIfam" id="TIGR00753">
    <property type="entry name" value="undec_PP_bacA"/>
    <property type="match status" value="1"/>
</dbReference>
<dbReference type="PANTHER" id="PTHR30622">
    <property type="entry name" value="UNDECAPRENYL-DIPHOSPHATASE"/>
    <property type="match status" value="1"/>
</dbReference>
<dbReference type="PANTHER" id="PTHR30622:SF3">
    <property type="entry name" value="UNDECAPRENYL-DIPHOSPHATASE"/>
    <property type="match status" value="1"/>
</dbReference>
<dbReference type="Pfam" id="PF02673">
    <property type="entry name" value="BacA"/>
    <property type="match status" value="1"/>
</dbReference>
<gene>
    <name evidence="1" type="primary">uppP</name>
    <name type="synonym">bacA</name>
    <name type="ordered locus">LI0557</name>
</gene>
<sequence length="266" mass="29493">MMSWLTIGVILGLVQGITEFLPVSSTGHLIIVAKFLHFTGSKASVFEVAVQLGSIMAVVVIYWNRFIGLIRPEKNKKFTGLYGIWLLFLTTLPPGIIGFLFHSYIKTLFTIPSVIAALTTGSIFMLISEQLCRNISQRIVTLDELTPKTALGIGFFECLALWPGFSRSAATIMGGMLLGAKRHLAAEYSFIAAVPVMFAATGYDLLKNWDLFTANDLPLFITGMICAFLAAWITIKVFILLISKISLRPFAYYRLLLAFIVYLCIK</sequence>
<protein>
    <recommendedName>
        <fullName evidence="1">Undecaprenyl-diphosphatase</fullName>
        <ecNumber evidence="1">3.6.1.27</ecNumber>
    </recommendedName>
    <alternativeName>
        <fullName evidence="1">Bacitracin resistance protein</fullName>
    </alternativeName>
    <alternativeName>
        <fullName evidence="1">Undecaprenyl pyrophosphate phosphatase</fullName>
    </alternativeName>
</protein>
<comment type="function">
    <text evidence="1">Catalyzes the dephosphorylation of undecaprenyl diphosphate (UPP). Confers resistance to bacitracin.</text>
</comment>
<comment type="catalytic activity">
    <reaction evidence="1">
        <text>di-trans,octa-cis-undecaprenyl diphosphate + H2O = di-trans,octa-cis-undecaprenyl phosphate + phosphate + H(+)</text>
        <dbReference type="Rhea" id="RHEA:28094"/>
        <dbReference type="ChEBI" id="CHEBI:15377"/>
        <dbReference type="ChEBI" id="CHEBI:15378"/>
        <dbReference type="ChEBI" id="CHEBI:43474"/>
        <dbReference type="ChEBI" id="CHEBI:58405"/>
        <dbReference type="ChEBI" id="CHEBI:60392"/>
        <dbReference type="EC" id="3.6.1.27"/>
    </reaction>
</comment>
<comment type="subcellular location">
    <subcellularLocation>
        <location evidence="1">Cell membrane</location>
        <topology evidence="1">Multi-pass membrane protein</topology>
    </subcellularLocation>
</comment>
<comment type="miscellaneous">
    <text>Bacitracin is thought to be involved in the inhibition of peptidoglycan synthesis by sequestering undecaprenyl diphosphate, thereby reducing the pool of lipid carrier available.</text>
</comment>
<comment type="similarity">
    <text evidence="1">Belongs to the UppP family.</text>
</comment>
<keyword id="KW-0046">Antibiotic resistance</keyword>
<keyword id="KW-1003">Cell membrane</keyword>
<keyword id="KW-0133">Cell shape</keyword>
<keyword id="KW-0961">Cell wall biogenesis/degradation</keyword>
<keyword id="KW-0378">Hydrolase</keyword>
<keyword id="KW-0472">Membrane</keyword>
<keyword id="KW-0573">Peptidoglycan synthesis</keyword>
<keyword id="KW-1185">Reference proteome</keyword>
<keyword id="KW-0812">Transmembrane</keyword>
<keyword id="KW-1133">Transmembrane helix</keyword>
<reference key="1">
    <citation type="submission" date="2005-11" db="EMBL/GenBank/DDBJ databases">
        <title>The complete genome sequence of Lawsonia intracellularis: the causative agent of proliferative enteropathy.</title>
        <authorList>
            <person name="Kaur K."/>
            <person name="Zhang Q."/>
            <person name="Beckler D."/>
            <person name="Munir S."/>
            <person name="Li L."/>
            <person name="Kinsley K."/>
            <person name="Herron L."/>
            <person name="Peterson A."/>
            <person name="May B."/>
            <person name="Singh S."/>
            <person name="Gebhart C."/>
            <person name="Kapur V."/>
        </authorList>
    </citation>
    <scope>NUCLEOTIDE SEQUENCE [LARGE SCALE GENOMIC DNA]</scope>
    <source>
        <strain>PHE/MN1-00</strain>
    </source>
</reference>
<organism>
    <name type="scientific">Lawsonia intracellularis (strain PHE/MN1-00)</name>
    <dbReference type="NCBI Taxonomy" id="363253"/>
    <lineage>
        <taxon>Bacteria</taxon>
        <taxon>Pseudomonadati</taxon>
        <taxon>Thermodesulfobacteriota</taxon>
        <taxon>Desulfovibrionia</taxon>
        <taxon>Desulfovibrionales</taxon>
        <taxon>Desulfovibrionaceae</taxon>
        <taxon>Lawsonia</taxon>
    </lineage>
</organism>
<feature type="chain" id="PRO_0000250241" description="Undecaprenyl-diphosphatase">
    <location>
        <begin position="1"/>
        <end position="266"/>
    </location>
</feature>
<feature type="transmembrane region" description="Helical" evidence="1">
    <location>
        <begin position="1"/>
        <end position="21"/>
    </location>
</feature>
<feature type="transmembrane region" description="Helical" evidence="1">
    <location>
        <begin position="43"/>
        <end position="63"/>
    </location>
</feature>
<feature type="transmembrane region" description="Helical" evidence="1">
    <location>
        <begin position="81"/>
        <end position="101"/>
    </location>
</feature>
<feature type="transmembrane region" description="Helical" evidence="1">
    <location>
        <begin position="107"/>
        <end position="127"/>
    </location>
</feature>
<feature type="transmembrane region" description="Helical" evidence="1">
    <location>
        <begin position="145"/>
        <end position="165"/>
    </location>
</feature>
<feature type="transmembrane region" description="Helical" evidence="1">
    <location>
        <begin position="183"/>
        <end position="203"/>
    </location>
</feature>
<feature type="transmembrane region" description="Helical" evidence="1">
    <location>
        <begin position="219"/>
        <end position="239"/>
    </location>
</feature>
<feature type="transmembrane region" description="Helical" evidence="1">
    <location>
        <begin position="245"/>
        <end position="265"/>
    </location>
</feature>
<accession>Q1MQW6</accession>